<protein>
    <recommendedName>
        <fullName>Uncharacterized protein MJ1580</fullName>
    </recommendedName>
</protein>
<comment type="subcellular location">
    <subcellularLocation>
        <location evidence="2">Cell membrane</location>
        <topology evidence="2">Multi-pass membrane protein</topology>
    </subcellularLocation>
</comment>
<comment type="similarity">
    <text evidence="2">To M.thermoautotrophicum MTH137.</text>
</comment>
<dbReference type="EMBL" id="L77117">
    <property type="protein sequence ID" value="AAB99600.1"/>
    <property type="molecule type" value="Genomic_DNA"/>
</dbReference>
<dbReference type="PIR" id="C64497">
    <property type="entry name" value="C64497"/>
</dbReference>
<dbReference type="SMR" id="Q58975"/>
<dbReference type="STRING" id="243232.MJ_1580"/>
<dbReference type="PaxDb" id="243232-MJ_1580"/>
<dbReference type="EnsemblBacteria" id="AAB99600">
    <property type="protein sequence ID" value="AAB99600"/>
    <property type="gene ID" value="MJ_1580"/>
</dbReference>
<dbReference type="KEGG" id="mja:MJ_1580"/>
<dbReference type="eggNOG" id="arCOG05092">
    <property type="taxonomic scope" value="Archaea"/>
</dbReference>
<dbReference type="HOGENOM" id="CLU_134280_4_0_2"/>
<dbReference type="InParanoid" id="Q58975"/>
<dbReference type="PhylomeDB" id="Q58975"/>
<dbReference type="Proteomes" id="UP000000805">
    <property type="component" value="Chromosome"/>
</dbReference>
<dbReference type="GO" id="GO:0005886">
    <property type="term" value="C:plasma membrane"/>
    <property type="evidence" value="ECO:0007669"/>
    <property type="project" value="UniProtKB-SubCell"/>
</dbReference>
<dbReference type="InterPro" id="IPR019277">
    <property type="entry name" value="DUF2304"/>
</dbReference>
<dbReference type="Pfam" id="PF10066">
    <property type="entry name" value="DUF2304"/>
    <property type="match status" value="1"/>
</dbReference>
<name>Y1580_METJA</name>
<feature type="chain" id="PRO_0000107425" description="Uncharacterized protein MJ1580">
    <location>
        <begin position="1"/>
        <end position="124"/>
    </location>
</feature>
<feature type="transmembrane region" description="Helical" evidence="1">
    <location>
        <begin position="13"/>
        <end position="33"/>
    </location>
</feature>
<feature type="transmembrane region" description="Helical" evidence="1">
    <location>
        <begin position="43"/>
        <end position="63"/>
    </location>
</feature>
<feature type="transmembrane region" description="Helical" evidence="1">
    <location>
        <begin position="71"/>
        <end position="91"/>
    </location>
</feature>
<reference key="1">
    <citation type="journal article" date="1996" name="Science">
        <title>Complete genome sequence of the methanogenic archaeon, Methanococcus jannaschii.</title>
        <authorList>
            <person name="Bult C.J."/>
            <person name="White O."/>
            <person name="Olsen G.J."/>
            <person name="Zhou L."/>
            <person name="Fleischmann R.D."/>
            <person name="Sutton G.G."/>
            <person name="Blake J.A."/>
            <person name="FitzGerald L.M."/>
            <person name="Clayton R.A."/>
            <person name="Gocayne J.D."/>
            <person name="Kerlavage A.R."/>
            <person name="Dougherty B.A."/>
            <person name="Tomb J.-F."/>
            <person name="Adams M.D."/>
            <person name="Reich C.I."/>
            <person name="Overbeek R."/>
            <person name="Kirkness E.F."/>
            <person name="Weinstock K.G."/>
            <person name="Merrick J.M."/>
            <person name="Glodek A."/>
            <person name="Scott J.L."/>
            <person name="Geoghagen N.S.M."/>
            <person name="Weidman J.F."/>
            <person name="Fuhrmann J.L."/>
            <person name="Nguyen D."/>
            <person name="Utterback T.R."/>
            <person name="Kelley J.M."/>
            <person name="Peterson J.D."/>
            <person name="Sadow P.W."/>
            <person name="Hanna M.C."/>
            <person name="Cotton M.D."/>
            <person name="Roberts K.M."/>
            <person name="Hurst M.A."/>
            <person name="Kaine B.P."/>
            <person name="Borodovsky M."/>
            <person name="Klenk H.-P."/>
            <person name="Fraser C.M."/>
            <person name="Smith H.O."/>
            <person name="Woese C.R."/>
            <person name="Venter J.C."/>
        </authorList>
    </citation>
    <scope>NUCLEOTIDE SEQUENCE [LARGE SCALE GENOMIC DNA]</scope>
    <source>
        <strain>ATCC 43067 / DSM 2661 / JAL-1 / JCM 10045 / NBRC 100440</strain>
    </source>
</reference>
<sequence length="124" mass="14644">MLIKILEEKLMELIQIVGVIFALFALSRVVLQLKRRSISFNEGLFWIFVWGFVVIFLVFPEFFGYVAEVLGVGRGVDALIYISIVVLFYLIYRLYAKINNLERQITHIVREIAIRDRYEPKKRD</sequence>
<organism>
    <name type="scientific">Methanocaldococcus jannaschii (strain ATCC 43067 / DSM 2661 / JAL-1 / JCM 10045 / NBRC 100440)</name>
    <name type="common">Methanococcus jannaschii</name>
    <dbReference type="NCBI Taxonomy" id="243232"/>
    <lineage>
        <taxon>Archaea</taxon>
        <taxon>Methanobacteriati</taxon>
        <taxon>Methanobacteriota</taxon>
        <taxon>Methanomada group</taxon>
        <taxon>Methanococci</taxon>
        <taxon>Methanococcales</taxon>
        <taxon>Methanocaldococcaceae</taxon>
        <taxon>Methanocaldococcus</taxon>
    </lineage>
</organism>
<evidence type="ECO:0000255" key="1"/>
<evidence type="ECO:0000305" key="2"/>
<gene>
    <name type="ordered locus">MJ1580</name>
</gene>
<keyword id="KW-1003">Cell membrane</keyword>
<keyword id="KW-0472">Membrane</keyword>
<keyword id="KW-1185">Reference proteome</keyword>
<keyword id="KW-0812">Transmembrane</keyword>
<keyword id="KW-1133">Transmembrane helix</keyword>
<accession>Q58975</accession>
<proteinExistence type="predicted"/>